<proteinExistence type="inferred from homology"/>
<keyword id="KW-0028">Amino-acid biosynthesis</keyword>
<keyword id="KW-0032">Aminotransferase</keyword>
<keyword id="KW-0055">Arginine biosynthesis</keyword>
<keyword id="KW-0963">Cytoplasm</keyword>
<keyword id="KW-0663">Pyridoxal phosphate</keyword>
<keyword id="KW-1185">Reference proteome</keyword>
<keyword id="KW-0808">Transferase</keyword>
<protein>
    <recommendedName>
        <fullName evidence="1">Acetylornithine aminotransferase</fullName>
        <shortName evidence="1">ACOAT</shortName>
        <ecNumber evidence="1">2.6.1.11</ecNumber>
    </recommendedName>
</protein>
<gene>
    <name evidence="1" type="primary">argD</name>
    <name type="ordered locus">alr1080</name>
</gene>
<sequence length="427" mass="46140">MSLQTLIEQATNPPESGSAASSPFSTDSFDASVMSTYGRFPLALERGAGCRVWDTQGKEYLDFVAGIATCTLGHAHPAMVEAVTRQIQKLHHVSNLYYIPEQGELAQWIIQHSCADRVFFCNSGAEANEAAIKLARKYAHTVLDIEKPIILTANASFHGRTLATITATGQAKYQKYFDPLVPGFHYVNYNDISAVEAAISELDEGDYRVAAILIEPLQGEGGVRPGDVEYFQKLRQICDDTGILLMFDEVQVGMGRSGKLWGYEYLGVEPDIFTSAKGLGGGIPIGAMMSKKFCDVFQPGEHASTFGGNPFACGVALAVCQTLERENILQNVQDRGEQLRSGLRAIAAKYPHHLTEVRGWGLINGLELAADIPLTAADVVKAAINEGLLLVPAGPKVVRFVPPLIVTEAEINTALKLLEKALATVTA</sequence>
<evidence type="ECO:0000255" key="1">
    <source>
        <dbReference type="HAMAP-Rule" id="MF_01107"/>
    </source>
</evidence>
<evidence type="ECO:0000256" key="2">
    <source>
        <dbReference type="SAM" id="MobiDB-lite"/>
    </source>
</evidence>
<reference key="1">
    <citation type="journal article" date="1994" name="J. Bacteriol.">
        <title>Analysis of expression of the argC and argD genes in the cyanobacterium Anabaena sp. strain PCC 7120.</title>
        <authorList>
            <person name="Floriano B."/>
            <person name="Herrero A."/>
            <person name="Flores E."/>
        </authorList>
    </citation>
    <scope>NUCLEOTIDE SEQUENCE [GENOMIC DNA]</scope>
</reference>
<reference key="2">
    <citation type="journal article" date="2001" name="DNA Res.">
        <title>Complete genomic sequence of the filamentous nitrogen-fixing cyanobacterium Anabaena sp. strain PCC 7120.</title>
        <authorList>
            <person name="Kaneko T."/>
            <person name="Nakamura Y."/>
            <person name="Wolk C.P."/>
            <person name="Kuritz T."/>
            <person name="Sasamoto S."/>
            <person name="Watanabe A."/>
            <person name="Iriguchi M."/>
            <person name="Ishikawa A."/>
            <person name="Kawashima K."/>
            <person name="Kimura T."/>
            <person name="Kishida Y."/>
            <person name="Kohara M."/>
            <person name="Matsumoto M."/>
            <person name="Matsuno A."/>
            <person name="Muraki A."/>
            <person name="Nakazaki N."/>
            <person name="Shimpo S."/>
            <person name="Sugimoto M."/>
            <person name="Takazawa M."/>
            <person name="Yamada M."/>
            <person name="Yasuda M."/>
            <person name="Tabata S."/>
        </authorList>
    </citation>
    <scope>NUCLEOTIDE SEQUENCE [LARGE SCALE GENOMIC DNA]</scope>
    <source>
        <strain>PCC 7120 / SAG 25.82 / UTEX 2576</strain>
    </source>
</reference>
<feature type="chain" id="PRO_0000112714" description="Acetylornithine aminotransferase">
    <location>
        <begin position="1"/>
        <end position="427"/>
    </location>
</feature>
<feature type="region of interest" description="Disordered" evidence="2">
    <location>
        <begin position="1"/>
        <end position="23"/>
    </location>
</feature>
<feature type="binding site" evidence="1">
    <location>
        <begin position="124"/>
        <end position="125"/>
    </location>
    <ligand>
        <name>pyridoxal 5'-phosphate</name>
        <dbReference type="ChEBI" id="CHEBI:597326"/>
    </ligand>
</feature>
<feature type="binding site" evidence="1">
    <location>
        <position position="157"/>
    </location>
    <ligand>
        <name>pyridoxal 5'-phosphate</name>
        <dbReference type="ChEBI" id="CHEBI:597326"/>
    </ligand>
</feature>
<feature type="binding site" evidence="1">
    <location>
        <position position="160"/>
    </location>
    <ligand>
        <name>N(2)-acetyl-L-ornithine</name>
        <dbReference type="ChEBI" id="CHEBI:57805"/>
    </ligand>
</feature>
<feature type="binding site" evidence="1">
    <location>
        <begin position="248"/>
        <end position="251"/>
    </location>
    <ligand>
        <name>pyridoxal 5'-phosphate</name>
        <dbReference type="ChEBI" id="CHEBI:597326"/>
    </ligand>
</feature>
<feature type="binding site" evidence="1">
    <location>
        <position position="304"/>
    </location>
    <ligand>
        <name>N(2)-acetyl-L-ornithine</name>
        <dbReference type="ChEBI" id="CHEBI:57805"/>
    </ligand>
</feature>
<feature type="binding site" evidence="1">
    <location>
        <position position="305"/>
    </location>
    <ligand>
        <name>pyridoxal 5'-phosphate</name>
        <dbReference type="ChEBI" id="CHEBI:597326"/>
    </ligand>
</feature>
<feature type="modified residue" description="N6-(pyridoxal phosphate)lysine" evidence="1">
    <location>
        <position position="277"/>
    </location>
</feature>
<organism>
    <name type="scientific">Nostoc sp. (strain PCC 7120 / SAG 25.82 / UTEX 2576)</name>
    <dbReference type="NCBI Taxonomy" id="103690"/>
    <lineage>
        <taxon>Bacteria</taxon>
        <taxon>Bacillati</taxon>
        <taxon>Cyanobacteriota</taxon>
        <taxon>Cyanophyceae</taxon>
        <taxon>Nostocales</taxon>
        <taxon>Nostocaceae</taxon>
        <taxon>Nostoc</taxon>
    </lineage>
</organism>
<comment type="catalytic activity">
    <reaction evidence="1">
        <text>N(2)-acetyl-L-ornithine + 2-oxoglutarate = N-acetyl-L-glutamate 5-semialdehyde + L-glutamate</text>
        <dbReference type="Rhea" id="RHEA:18049"/>
        <dbReference type="ChEBI" id="CHEBI:16810"/>
        <dbReference type="ChEBI" id="CHEBI:29123"/>
        <dbReference type="ChEBI" id="CHEBI:29985"/>
        <dbReference type="ChEBI" id="CHEBI:57805"/>
        <dbReference type="EC" id="2.6.1.11"/>
    </reaction>
</comment>
<comment type="cofactor">
    <cofactor evidence="1">
        <name>pyridoxal 5'-phosphate</name>
        <dbReference type="ChEBI" id="CHEBI:597326"/>
    </cofactor>
    <text evidence="1">Binds 1 pyridoxal phosphate per subunit.</text>
</comment>
<comment type="pathway">
    <text evidence="1">Amino-acid biosynthesis; L-arginine biosynthesis; N(2)-acetyl-L-ornithine from L-glutamate: step 4/4.</text>
</comment>
<comment type="subunit">
    <text evidence="1">Homodimer.</text>
</comment>
<comment type="subcellular location">
    <subcellularLocation>
        <location evidence="1">Cytoplasm</location>
    </subcellularLocation>
</comment>
<comment type="miscellaneous">
    <text evidence="1">May also have succinyldiaminopimelate aminotransferase activity, thus carrying out the corresponding step in lysine biosynthesis.</text>
</comment>
<comment type="similarity">
    <text evidence="1">Belongs to the class-III pyridoxal-phosphate-dependent aminotransferase family. ArgD subfamily.</text>
</comment>
<accession>P54752</accession>
<dbReference type="EC" id="2.6.1.11" evidence="1"/>
<dbReference type="EMBL" id="X78854">
    <property type="protein sequence ID" value="CAA55410.1"/>
    <property type="molecule type" value="Genomic_DNA"/>
</dbReference>
<dbReference type="EMBL" id="BA000019">
    <property type="protein sequence ID" value="BAB73037.1"/>
    <property type="molecule type" value="Genomic_DNA"/>
</dbReference>
<dbReference type="PIR" id="AE1941">
    <property type="entry name" value="AE1941"/>
</dbReference>
<dbReference type="RefSeq" id="WP_010995254.1">
    <property type="nucleotide sequence ID" value="NZ_RSCN01000008.1"/>
</dbReference>
<dbReference type="SMR" id="P54752"/>
<dbReference type="STRING" id="103690.gene:10493094"/>
<dbReference type="KEGG" id="ana:alr1080"/>
<dbReference type="eggNOG" id="COG4992">
    <property type="taxonomic scope" value="Bacteria"/>
</dbReference>
<dbReference type="OrthoDB" id="9807885at2"/>
<dbReference type="UniPathway" id="UPA00068">
    <property type="reaction ID" value="UER00109"/>
</dbReference>
<dbReference type="Proteomes" id="UP000002483">
    <property type="component" value="Chromosome"/>
</dbReference>
<dbReference type="GO" id="GO:0005737">
    <property type="term" value="C:cytoplasm"/>
    <property type="evidence" value="ECO:0007669"/>
    <property type="project" value="UniProtKB-SubCell"/>
</dbReference>
<dbReference type="GO" id="GO:0042802">
    <property type="term" value="F:identical protein binding"/>
    <property type="evidence" value="ECO:0007669"/>
    <property type="project" value="TreeGrafter"/>
</dbReference>
<dbReference type="GO" id="GO:0003992">
    <property type="term" value="F:N2-acetyl-L-ornithine:2-oxoglutarate 5-aminotransferase activity"/>
    <property type="evidence" value="ECO:0007669"/>
    <property type="project" value="UniProtKB-UniRule"/>
</dbReference>
<dbReference type="GO" id="GO:0030170">
    <property type="term" value="F:pyridoxal phosphate binding"/>
    <property type="evidence" value="ECO:0007669"/>
    <property type="project" value="InterPro"/>
</dbReference>
<dbReference type="GO" id="GO:0006526">
    <property type="term" value="P:L-arginine biosynthetic process"/>
    <property type="evidence" value="ECO:0007669"/>
    <property type="project" value="UniProtKB-UniRule"/>
</dbReference>
<dbReference type="CDD" id="cd00610">
    <property type="entry name" value="OAT_like"/>
    <property type="match status" value="1"/>
</dbReference>
<dbReference type="FunFam" id="3.40.640.10:FF:000004">
    <property type="entry name" value="Acetylornithine aminotransferase"/>
    <property type="match status" value="1"/>
</dbReference>
<dbReference type="Gene3D" id="3.90.1150.10">
    <property type="entry name" value="Aspartate Aminotransferase, domain 1"/>
    <property type="match status" value="1"/>
</dbReference>
<dbReference type="Gene3D" id="3.40.640.10">
    <property type="entry name" value="Type I PLP-dependent aspartate aminotransferase-like (Major domain)"/>
    <property type="match status" value="1"/>
</dbReference>
<dbReference type="HAMAP" id="MF_01107">
    <property type="entry name" value="ArgD_aminotrans_3"/>
    <property type="match status" value="1"/>
</dbReference>
<dbReference type="InterPro" id="IPR004636">
    <property type="entry name" value="AcOrn/SuccOrn_fam"/>
</dbReference>
<dbReference type="InterPro" id="IPR005814">
    <property type="entry name" value="Aminotrans_3"/>
</dbReference>
<dbReference type="InterPro" id="IPR049704">
    <property type="entry name" value="Aminotrans_3_PPA_site"/>
</dbReference>
<dbReference type="InterPro" id="IPR050103">
    <property type="entry name" value="Class-III_PLP-dep_AT"/>
</dbReference>
<dbReference type="InterPro" id="IPR015424">
    <property type="entry name" value="PyrdxlP-dep_Trfase"/>
</dbReference>
<dbReference type="InterPro" id="IPR015421">
    <property type="entry name" value="PyrdxlP-dep_Trfase_major"/>
</dbReference>
<dbReference type="InterPro" id="IPR015422">
    <property type="entry name" value="PyrdxlP-dep_Trfase_small"/>
</dbReference>
<dbReference type="NCBIfam" id="TIGR00707">
    <property type="entry name" value="argD"/>
    <property type="match status" value="1"/>
</dbReference>
<dbReference type="NCBIfam" id="NF002325">
    <property type="entry name" value="PRK01278.1"/>
    <property type="match status" value="1"/>
</dbReference>
<dbReference type="PANTHER" id="PTHR11986:SF79">
    <property type="entry name" value="ACETYLORNITHINE AMINOTRANSFERASE, MITOCHONDRIAL"/>
    <property type="match status" value="1"/>
</dbReference>
<dbReference type="PANTHER" id="PTHR11986">
    <property type="entry name" value="AMINOTRANSFERASE CLASS III"/>
    <property type="match status" value="1"/>
</dbReference>
<dbReference type="Pfam" id="PF00202">
    <property type="entry name" value="Aminotran_3"/>
    <property type="match status" value="1"/>
</dbReference>
<dbReference type="PIRSF" id="PIRSF000521">
    <property type="entry name" value="Transaminase_4ab_Lys_Orn"/>
    <property type="match status" value="1"/>
</dbReference>
<dbReference type="SUPFAM" id="SSF53383">
    <property type="entry name" value="PLP-dependent transferases"/>
    <property type="match status" value="1"/>
</dbReference>
<dbReference type="PROSITE" id="PS00600">
    <property type="entry name" value="AA_TRANSFER_CLASS_3"/>
    <property type="match status" value="1"/>
</dbReference>
<name>ARGD_NOSS1</name>